<sequence>MSFRSQTSSTTSMRPVSSYSSRSISLHRSVPLGSSASVVGGAGGHGARISSGGFGLASGYSSGSSFSMSVKGSGLFNNEKETMQILNDRLASYLETVRNLEQANSKLELQIRETLEKRGPTTQDYSAYEKVVEDLKSQIYDMTVNNARLVLQIDNARLATDDFRVKYESELAIRQSVESDIIGLRKVIDDTNINRMNLETDIESLKEELIFIKRSHQTDVEELRKHISECGVQVDVDAPKGQDLSKIMEEIRAQYETIIQKNREELKDWHNSQILIVETEVKENTEALQKSRTEVTELRRQFQTLEIDIESLRTMKASLEANLHDVEMRNNMEMEGFNFIIRQQEADLQQLRTSIQAQVHEYQALLNIKMKLEAEIATYRRLLDGEDFRLQDALAVQTTKVQKKITVTETVVDGKVVSQSSEVQEIKK</sequence>
<comment type="function">
    <text evidence="1">When phosphorylated, plays a role in filament reorganization.</text>
</comment>
<comment type="subunit">
    <text evidence="1">Heterotetramer of two type I and two type II keratins. Keratin-18 associates with keratin-8 (By similarity).</text>
</comment>
<comment type="PTM">
    <text evidence="1">Phosphorylated.</text>
</comment>
<comment type="PTM">
    <text evidence="1">Proteolytically cleaved by caspases during epithelial cell apoptosis.</text>
</comment>
<comment type="miscellaneous">
    <text evidence="5">There are two types of cytoskeletal and microfibrillar keratin: I (acidic; 40-55 kDa) and II (neutral to basic; 56-70 kDa).</text>
</comment>
<comment type="similarity">
    <text evidence="4">Belongs to the intermediate filament family.</text>
</comment>
<organism>
    <name type="scientific">Polypterus senegalus</name>
    <name type="common">Senegal bichir</name>
    <dbReference type="NCBI Taxonomy" id="55291"/>
    <lineage>
        <taxon>Eukaryota</taxon>
        <taxon>Metazoa</taxon>
        <taxon>Chordata</taxon>
        <taxon>Craniata</taxon>
        <taxon>Vertebrata</taxon>
        <taxon>Euteleostomi</taxon>
        <taxon>Actinopterygii</taxon>
        <taxon>Polypteriformes</taxon>
        <taxon>Polypteridae</taxon>
        <taxon>Polypterus</taxon>
    </lineage>
</organism>
<evidence type="ECO:0000250" key="1"/>
<evidence type="ECO:0000250" key="2">
    <source>
        <dbReference type="UniProtKB" id="P05783"/>
    </source>
</evidence>
<evidence type="ECO:0000255" key="3"/>
<evidence type="ECO:0000255" key="4">
    <source>
        <dbReference type="PROSITE-ProRule" id="PRU01188"/>
    </source>
</evidence>
<evidence type="ECO:0000305" key="5"/>
<evidence type="ECO:0000312" key="6">
    <source>
        <dbReference type="EMBL" id="CAL99126.1"/>
    </source>
</evidence>
<proteinExistence type="evidence at transcript level"/>
<feature type="initiator methionine" description="Removed" evidence="2">
    <location>
        <position position="1"/>
    </location>
</feature>
<feature type="chain" id="PRO_0000289074" description="Keratin, type I cytoskeletal 18-A">
    <location>
        <begin position="2"/>
        <end position="428"/>
    </location>
</feature>
<feature type="domain" description="IF rod" evidence="4">
    <location>
        <begin position="79"/>
        <end position="390"/>
    </location>
</feature>
<feature type="region of interest" description="Head" evidence="3">
    <location>
        <begin position="2"/>
        <end position="78"/>
    </location>
</feature>
<feature type="region of interest" description="Coil 1A" evidence="3">
    <location>
        <begin position="79"/>
        <end position="114"/>
    </location>
</feature>
<feature type="region of interest" description="Linker 1" evidence="3">
    <location>
        <begin position="115"/>
        <end position="131"/>
    </location>
</feature>
<feature type="region of interest" description="Coil 1B" evidence="3">
    <location>
        <begin position="132"/>
        <end position="223"/>
    </location>
</feature>
<feature type="region of interest" description="Linker 12" evidence="3">
    <location>
        <begin position="224"/>
        <end position="247"/>
    </location>
</feature>
<feature type="region of interest" description="Coil 2" evidence="3">
    <location>
        <begin position="248"/>
        <end position="385"/>
    </location>
</feature>
<feature type="region of interest" description="Tail" evidence="3">
    <location>
        <begin position="386"/>
        <end position="428"/>
    </location>
</feature>
<feature type="site" description="Cleavage; by caspases" evidence="1">
    <location>
        <begin position="237"/>
        <end position="238"/>
    </location>
</feature>
<gene>
    <name evidence="6" type="primary">krt18a</name>
</gene>
<protein>
    <recommendedName>
        <fullName>Keratin, type I cytoskeletal 18-A</fullName>
    </recommendedName>
    <alternativeName>
        <fullName>Cytokeratin-18-A</fullName>
        <shortName>CK-18-A</shortName>
    </alternativeName>
    <alternativeName>
        <fullName>Keratin-18-A</fullName>
        <shortName>K18-A</shortName>
    </alternativeName>
</protein>
<dbReference type="EMBL" id="AM419448">
    <property type="protein sequence ID" value="CAL99126.1"/>
    <property type="molecule type" value="mRNA"/>
</dbReference>
<dbReference type="SMR" id="A1KQY9"/>
<dbReference type="OrthoDB" id="2441647at2759"/>
<dbReference type="GO" id="GO:0045095">
    <property type="term" value="C:keratin filament"/>
    <property type="evidence" value="ECO:0007669"/>
    <property type="project" value="TreeGrafter"/>
</dbReference>
<dbReference type="GO" id="GO:0005198">
    <property type="term" value="F:structural molecule activity"/>
    <property type="evidence" value="ECO:0007669"/>
    <property type="project" value="InterPro"/>
</dbReference>
<dbReference type="GO" id="GO:0045104">
    <property type="term" value="P:intermediate filament cytoskeleton organization"/>
    <property type="evidence" value="ECO:0007669"/>
    <property type="project" value="TreeGrafter"/>
</dbReference>
<dbReference type="FunFam" id="1.20.5.1160:FF:000002">
    <property type="entry name" value="Type I keratin 10"/>
    <property type="match status" value="1"/>
</dbReference>
<dbReference type="FunFam" id="1.20.5.170:FF:000002">
    <property type="entry name" value="Type I keratin KA11"/>
    <property type="match status" value="1"/>
</dbReference>
<dbReference type="FunFam" id="1.20.5.500:FF:000001">
    <property type="entry name" value="Type II keratin 23"/>
    <property type="match status" value="1"/>
</dbReference>
<dbReference type="Gene3D" id="1.20.5.170">
    <property type="match status" value="1"/>
</dbReference>
<dbReference type="Gene3D" id="1.20.5.500">
    <property type="entry name" value="Single helix bin"/>
    <property type="match status" value="1"/>
</dbReference>
<dbReference type="Gene3D" id="1.20.5.1160">
    <property type="entry name" value="Vasodilator-stimulated phosphoprotein"/>
    <property type="match status" value="1"/>
</dbReference>
<dbReference type="InterPro" id="IPR018039">
    <property type="entry name" value="IF_conserved"/>
</dbReference>
<dbReference type="InterPro" id="IPR039008">
    <property type="entry name" value="IF_rod_dom"/>
</dbReference>
<dbReference type="InterPro" id="IPR002957">
    <property type="entry name" value="Keratin_I"/>
</dbReference>
<dbReference type="PANTHER" id="PTHR23239">
    <property type="entry name" value="INTERMEDIATE FILAMENT"/>
    <property type="match status" value="1"/>
</dbReference>
<dbReference type="PANTHER" id="PTHR23239:SF349">
    <property type="entry name" value="KERATIN, TYPE I CYTOSKELETAL 18"/>
    <property type="match status" value="1"/>
</dbReference>
<dbReference type="Pfam" id="PF00038">
    <property type="entry name" value="Filament"/>
    <property type="match status" value="1"/>
</dbReference>
<dbReference type="PRINTS" id="PR01248">
    <property type="entry name" value="TYPE1KERATIN"/>
</dbReference>
<dbReference type="SMART" id="SM01391">
    <property type="entry name" value="Filament"/>
    <property type="match status" value="1"/>
</dbReference>
<dbReference type="SUPFAM" id="SSF64593">
    <property type="entry name" value="Intermediate filament protein, coiled coil region"/>
    <property type="match status" value="2"/>
</dbReference>
<dbReference type="PROSITE" id="PS00226">
    <property type="entry name" value="IF_ROD_1"/>
    <property type="match status" value="1"/>
</dbReference>
<dbReference type="PROSITE" id="PS51842">
    <property type="entry name" value="IF_ROD_2"/>
    <property type="match status" value="1"/>
</dbReference>
<accession>A1KQY9</accession>
<name>K118A_POLSE</name>
<reference key="1">
    <citation type="journal article" date="2007" name="Front. Zool.">
        <title>A novel and ancient group of type I keratins with members in bichir, sturgeon and gar.</title>
        <authorList>
            <person name="Schaffeld M."/>
            <person name="Haberkamp M."/>
            <person name="Schatzlein S."/>
            <person name="Neumann S."/>
            <person name="Hunzinger C."/>
        </authorList>
    </citation>
    <scope>NUCLEOTIDE SEQUENCE [MRNA]</scope>
</reference>
<keyword id="KW-0175">Coiled coil</keyword>
<keyword id="KW-0403">Intermediate filament</keyword>
<keyword id="KW-0416">Keratin</keyword>
<keyword id="KW-0597">Phosphoprotein</keyword>